<gene>
    <name type="primary">DI19-6</name>
    <name type="ordered locus">At5g26990</name>
    <name type="ORF">F2P16.10</name>
</gene>
<organism>
    <name type="scientific">Arabidopsis thaliana</name>
    <name type="common">Mouse-ear cress</name>
    <dbReference type="NCBI Taxonomy" id="3702"/>
    <lineage>
        <taxon>Eukaryota</taxon>
        <taxon>Viridiplantae</taxon>
        <taxon>Streptophyta</taxon>
        <taxon>Embryophyta</taxon>
        <taxon>Tracheophyta</taxon>
        <taxon>Spermatophyta</taxon>
        <taxon>Magnoliopsida</taxon>
        <taxon>eudicotyledons</taxon>
        <taxon>Gunneridae</taxon>
        <taxon>Pentapetalae</taxon>
        <taxon>rosids</taxon>
        <taxon>malvids</taxon>
        <taxon>Brassicales</taxon>
        <taxon>Brassicaceae</taxon>
        <taxon>Camelineae</taxon>
        <taxon>Arabidopsis</taxon>
    </lineage>
</organism>
<comment type="subcellular location">
    <subcellularLocation>
        <location evidence="2">Nucleus</location>
    </subcellularLocation>
</comment>
<comment type="tissue specificity">
    <text evidence="2">Expressed in seedlings, roots, leaves, stems, flowers and siliques.</text>
</comment>
<comment type="induction">
    <text>Not induced by abscisic acid.</text>
</comment>
<comment type="PTM">
    <text evidence="2">Phosphorylated in vitro by CPK3 or CPK11.</text>
</comment>
<comment type="similarity">
    <text evidence="3">Belongs to the Di19 family.</text>
</comment>
<comment type="sequence caution" evidence="3">
    <conflict type="erroneous gene model prediction">
        <sequence resource="EMBL-CDS" id="AAB61057"/>
    </conflict>
</comment>
<sequence>MDSDSWSDRLASASRRYQLDFLSRSDNFLGFEEIEGEDDFREEYACPFCSDYFDIVSLCCHIDEDHPMDAKNGVCPICAVKVSSDMIAHITLQHANMFKVTRKRKSRRGGAQSMLSILKREFPDGNFQSLFEGTSRAVSSSSASIAADPLLSSFISPMADDFFISESSLCADTSSAKKTLNQSLPERNVEKQSLSAEDHREKLKQSEFVQGILSSMILEDGL</sequence>
<reference key="1">
    <citation type="journal article" date="2000" name="Nature">
        <title>Sequence and analysis of chromosome 5 of the plant Arabidopsis thaliana.</title>
        <authorList>
            <person name="Tabata S."/>
            <person name="Kaneko T."/>
            <person name="Nakamura Y."/>
            <person name="Kotani H."/>
            <person name="Kato T."/>
            <person name="Asamizu E."/>
            <person name="Miyajima N."/>
            <person name="Sasamoto S."/>
            <person name="Kimura T."/>
            <person name="Hosouchi T."/>
            <person name="Kawashima K."/>
            <person name="Kohara M."/>
            <person name="Matsumoto M."/>
            <person name="Matsuno A."/>
            <person name="Muraki A."/>
            <person name="Nakayama S."/>
            <person name="Nakazaki N."/>
            <person name="Naruo K."/>
            <person name="Okumura S."/>
            <person name="Shinpo S."/>
            <person name="Takeuchi C."/>
            <person name="Wada T."/>
            <person name="Watanabe A."/>
            <person name="Yamada M."/>
            <person name="Yasuda M."/>
            <person name="Sato S."/>
            <person name="de la Bastide M."/>
            <person name="Huang E."/>
            <person name="Spiegel L."/>
            <person name="Gnoj L."/>
            <person name="O'Shaughnessy A."/>
            <person name="Preston R."/>
            <person name="Habermann K."/>
            <person name="Murray J."/>
            <person name="Johnson D."/>
            <person name="Rohlfing T."/>
            <person name="Nelson J."/>
            <person name="Stoneking T."/>
            <person name="Pepin K."/>
            <person name="Spieth J."/>
            <person name="Sekhon M."/>
            <person name="Armstrong J."/>
            <person name="Becker M."/>
            <person name="Belter E."/>
            <person name="Cordum H."/>
            <person name="Cordes M."/>
            <person name="Courtney L."/>
            <person name="Courtney W."/>
            <person name="Dante M."/>
            <person name="Du H."/>
            <person name="Edwards J."/>
            <person name="Fryman J."/>
            <person name="Haakensen B."/>
            <person name="Lamar E."/>
            <person name="Latreille P."/>
            <person name="Leonard S."/>
            <person name="Meyer R."/>
            <person name="Mulvaney E."/>
            <person name="Ozersky P."/>
            <person name="Riley A."/>
            <person name="Strowmatt C."/>
            <person name="Wagner-McPherson C."/>
            <person name="Wollam A."/>
            <person name="Yoakum M."/>
            <person name="Bell M."/>
            <person name="Dedhia N."/>
            <person name="Parnell L."/>
            <person name="Shah R."/>
            <person name="Rodriguez M."/>
            <person name="Hoon See L."/>
            <person name="Vil D."/>
            <person name="Baker J."/>
            <person name="Kirchoff K."/>
            <person name="Toth K."/>
            <person name="King L."/>
            <person name="Bahret A."/>
            <person name="Miller B."/>
            <person name="Marra M.A."/>
            <person name="Martienssen R."/>
            <person name="McCombie W.R."/>
            <person name="Wilson R.K."/>
            <person name="Murphy G."/>
            <person name="Bancroft I."/>
            <person name="Volckaert G."/>
            <person name="Wambutt R."/>
            <person name="Duesterhoeft A."/>
            <person name="Stiekema W."/>
            <person name="Pohl T."/>
            <person name="Entian K.-D."/>
            <person name="Terryn N."/>
            <person name="Hartley N."/>
            <person name="Bent E."/>
            <person name="Johnson S."/>
            <person name="Langham S.-A."/>
            <person name="McCullagh B."/>
            <person name="Robben J."/>
            <person name="Grymonprez B."/>
            <person name="Zimmermann W."/>
            <person name="Ramsperger U."/>
            <person name="Wedler H."/>
            <person name="Balke K."/>
            <person name="Wedler E."/>
            <person name="Peters S."/>
            <person name="van Staveren M."/>
            <person name="Dirkse W."/>
            <person name="Mooijman P."/>
            <person name="Klein Lankhorst R."/>
            <person name="Weitzenegger T."/>
            <person name="Bothe G."/>
            <person name="Rose M."/>
            <person name="Hauf J."/>
            <person name="Berneiser S."/>
            <person name="Hempel S."/>
            <person name="Feldpausch M."/>
            <person name="Lamberth S."/>
            <person name="Villarroel R."/>
            <person name="Gielen J."/>
            <person name="Ardiles W."/>
            <person name="Bents O."/>
            <person name="Lemcke K."/>
            <person name="Kolesov G."/>
            <person name="Mayer K.F.X."/>
            <person name="Rudd S."/>
            <person name="Schoof H."/>
            <person name="Schueller C."/>
            <person name="Zaccaria P."/>
            <person name="Mewes H.-W."/>
            <person name="Bevan M."/>
            <person name="Fransz P.F."/>
        </authorList>
    </citation>
    <scope>NUCLEOTIDE SEQUENCE [LARGE SCALE GENOMIC DNA]</scope>
    <source>
        <strain>cv. Columbia</strain>
    </source>
</reference>
<reference key="2">
    <citation type="journal article" date="2017" name="Plant J.">
        <title>Araport11: a complete reannotation of the Arabidopsis thaliana reference genome.</title>
        <authorList>
            <person name="Cheng C.Y."/>
            <person name="Krishnakumar V."/>
            <person name="Chan A.P."/>
            <person name="Thibaud-Nissen F."/>
            <person name="Schobel S."/>
            <person name="Town C.D."/>
        </authorList>
    </citation>
    <scope>GENOME REANNOTATION</scope>
    <source>
        <strain>cv. Columbia</strain>
    </source>
</reference>
<reference key="3">
    <citation type="submission" date="2004-03" db="EMBL/GenBank/DDBJ databases">
        <title>Arabidopsis ORF clones.</title>
        <authorList>
            <person name="Kim C.J."/>
            <person name="Chen H."/>
            <person name="Cheuk R.F."/>
            <person name="Shinn P."/>
            <person name="Ecker J.R."/>
        </authorList>
    </citation>
    <scope>NUCLEOTIDE SEQUENCE [LARGE SCALE MRNA]</scope>
    <source>
        <strain>cv. Columbia</strain>
    </source>
</reference>
<reference key="4">
    <citation type="journal article" date="2006" name="Plant Mol. Biol.">
        <title>The Arabidopsis AtDi19 gene family encodes a novel type of Cys2/His2 zinc-finger protein implicated in ABA-independent dehydration, high-salinity stress and light signaling pathways.</title>
        <authorList>
            <person name="Rodriguez Milla M.A."/>
            <person name="Townsend J."/>
            <person name="Chang I.-F."/>
            <person name="Cushman J.C."/>
        </authorList>
    </citation>
    <scope>SUBCELLULAR LOCATION</scope>
    <scope>TISSUE SPECIFICITY</scope>
    <scope>PHOSPHORYLATION</scope>
    <scope>GENE FAMILY</scope>
    <scope>NOMENCLATURE</scope>
</reference>
<name>DI196_ARATH</name>
<proteinExistence type="evidence at protein level"/>
<dbReference type="EMBL" id="AF007270">
    <property type="protein sequence ID" value="AAB61057.1"/>
    <property type="status" value="ALT_SEQ"/>
    <property type="molecule type" value="Genomic_DNA"/>
</dbReference>
<dbReference type="EMBL" id="CP002688">
    <property type="protein sequence ID" value="AED93638.1"/>
    <property type="molecule type" value="Genomic_DNA"/>
</dbReference>
<dbReference type="EMBL" id="BT011220">
    <property type="protein sequence ID" value="AAR92256.1"/>
    <property type="molecule type" value="mRNA"/>
</dbReference>
<dbReference type="EMBL" id="BT012151">
    <property type="protein sequence ID" value="AAS76246.1"/>
    <property type="molecule type" value="mRNA"/>
</dbReference>
<dbReference type="PIR" id="T01774">
    <property type="entry name" value="T01774"/>
</dbReference>
<dbReference type="RefSeq" id="NP_198051.1">
    <property type="nucleotide sequence ID" value="NM_122581.3"/>
</dbReference>
<dbReference type="FunCoup" id="Q6NM26">
    <property type="interactions" value="1288"/>
</dbReference>
<dbReference type="PaxDb" id="3702-AT5G26990.1"/>
<dbReference type="ProteomicsDB" id="224060"/>
<dbReference type="EnsemblPlants" id="AT5G26990.1">
    <property type="protein sequence ID" value="AT5G26990.1"/>
    <property type="gene ID" value="AT5G26990"/>
</dbReference>
<dbReference type="GeneID" id="832757"/>
<dbReference type="Gramene" id="AT5G26990.1">
    <property type="protein sequence ID" value="AT5G26990.1"/>
    <property type="gene ID" value="AT5G26990"/>
</dbReference>
<dbReference type="KEGG" id="ath:AT5G26990"/>
<dbReference type="Araport" id="AT5G26990"/>
<dbReference type="TAIR" id="AT5G26990"/>
<dbReference type="eggNOG" id="ENOG502QW9I">
    <property type="taxonomic scope" value="Eukaryota"/>
</dbReference>
<dbReference type="HOGENOM" id="CLU_072240_0_1_1"/>
<dbReference type="InParanoid" id="Q6NM26"/>
<dbReference type="OMA" id="GNDIVGH"/>
<dbReference type="PhylomeDB" id="Q6NM26"/>
<dbReference type="PRO" id="PR:Q6NM26"/>
<dbReference type="Proteomes" id="UP000006548">
    <property type="component" value="Chromosome 5"/>
</dbReference>
<dbReference type="ExpressionAtlas" id="Q6NM26">
    <property type="expression patterns" value="baseline and differential"/>
</dbReference>
<dbReference type="GO" id="GO:0005634">
    <property type="term" value="C:nucleus"/>
    <property type="evidence" value="ECO:0000314"/>
    <property type="project" value="TAIR"/>
</dbReference>
<dbReference type="InterPro" id="IPR033347">
    <property type="entry name" value="DI19"/>
</dbReference>
<dbReference type="InterPro" id="IPR027935">
    <property type="entry name" value="Di19_C"/>
</dbReference>
<dbReference type="InterPro" id="IPR008598">
    <property type="entry name" value="Di19_Zn-bd"/>
</dbReference>
<dbReference type="PANTHER" id="PTHR31875">
    <property type="entry name" value="PROTEIN DEHYDRATION-INDUCED 19"/>
    <property type="match status" value="1"/>
</dbReference>
<dbReference type="PANTHER" id="PTHR31875:SF26">
    <property type="entry name" value="PROTEIN DEHYDRATION-INDUCED 19-RELATED"/>
    <property type="match status" value="1"/>
</dbReference>
<dbReference type="Pfam" id="PF14571">
    <property type="entry name" value="Di19_C"/>
    <property type="match status" value="1"/>
</dbReference>
<dbReference type="Pfam" id="PF05605">
    <property type="entry name" value="zf-Di19"/>
    <property type="match status" value="1"/>
</dbReference>
<keyword id="KW-0539">Nucleus</keyword>
<keyword id="KW-0597">Phosphoprotein</keyword>
<keyword id="KW-1185">Reference proteome</keyword>
<protein>
    <recommendedName>
        <fullName>Protein DEHYDRATION-INDUCED 19 homolog 6</fullName>
        <shortName>AtDi19-6</shortName>
    </recommendedName>
</protein>
<feature type="chain" id="PRO_0000304418" description="Protein DEHYDRATION-INDUCED 19 homolog 6">
    <location>
        <begin position="1"/>
        <end position="222"/>
    </location>
</feature>
<feature type="modified residue" description="Phosphoserine" evidence="1">
    <location>
        <position position="116"/>
    </location>
</feature>
<evidence type="ECO:0000250" key="1">
    <source>
        <dbReference type="UniProtKB" id="Q39083"/>
    </source>
</evidence>
<evidence type="ECO:0000269" key="2">
    <source>
    </source>
</evidence>
<evidence type="ECO:0000305" key="3"/>
<accession>Q6NM26</accession>
<accession>O04640</accession>